<organism>
    <name type="scientific">Escherichia fergusonii (strain ATCC 35469 / DSM 13698 / CCUG 18766 / IAM 14443 / JCM 21226 / LMG 7866 / NBRC 102419 / NCTC 12128 / CDC 0568-73)</name>
    <dbReference type="NCBI Taxonomy" id="585054"/>
    <lineage>
        <taxon>Bacteria</taxon>
        <taxon>Pseudomonadati</taxon>
        <taxon>Pseudomonadota</taxon>
        <taxon>Gammaproteobacteria</taxon>
        <taxon>Enterobacterales</taxon>
        <taxon>Enterobacteriaceae</taxon>
        <taxon>Escherichia</taxon>
    </lineage>
</organism>
<keyword id="KW-0408">Iron</keyword>
<keyword id="KW-0479">Metal-binding</keyword>
<dbReference type="EMBL" id="CU928158">
    <property type="protein sequence ID" value="CAQ88188.1"/>
    <property type="molecule type" value="Genomic_DNA"/>
</dbReference>
<dbReference type="RefSeq" id="WP_000028953.1">
    <property type="nucleotide sequence ID" value="NC_011740.1"/>
</dbReference>
<dbReference type="SMR" id="B7LKB1"/>
<dbReference type="GeneID" id="93774608"/>
<dbReference type="KEGG" id="efe:EFER_0644"/>
<dbReference type="HOGENOM" id="CLU_069054_5_1_6"/>
<dbReference type="OrthoDB" id="9801228at2"/>
<dbReference type="Proteomes" id="UP000000745">
    <property type="component" value="Chromosome"/>
</dbReference>
<dbReference type="GO" id="GO:0005829">
    <property type="term" value="C:cytosol"/>
    <property type="evidence" value="ECO:0007669"/>
    <property type="project" value="TreeGrafter"/>
</dbReference>
<dbReference type="GO" id="GO:0051537">
    <property type="term" value="F:2 iron, 2 sulfur cluster binding"/>
    <property type="evidence" value="ECO:0007669"/>
    <property type="project" value="TreeGrafter"/>
</dbReference>
<dbReference type="GO" id="GO:0005506">
    <property type="term" value="F:iron ion binding"/>
    <property type="evidence" value="ECO:0007669"/>
    <property type="project" value="UniProtKB-UniRule"/>
</dbReference>
<dbReference type="GO" id="GO:0016226">
    <property type="term" value="P:iron-sulfur cluster assembly"/>
    <property type="evidence" value="ECO:0007669"/>
    <property type="project" value="UniProtKB-UniRule"/>
</dbReference>
<dbReference type="FunFam" id="2.60.300.12:FF:000001">
    <property type="entry name" value="Iron-binding protein IscA"/>
    <property type="match status" value="1"/>
</dbReference>
<dbReference type="Gene3D" id="2.60.300.12">
    <property type="entry name" value="HesB-like domain"/>
    <property type="match status" value="1"/>
</dbReference>
<dbReference type="HAMAP" id="MF_01429">
    <property type="entry name" value="Fe_S_insert_IscA"/>
    <property type="match status" value="1"/>
</dbReference>
<dbReference type="InterPro" id="IPR050322">
    <property type="entry name" value="Fe-S_cluster_asmbl/transfer"/>
</dbReference>
<dbReference type="InterPro" id="IPR000361">
    <property type="entry name" value="FeS_biogenesis"/>
</dbReference>
<dbReference type="InterPro" id="IPR016092">
    <property type="entry name" value="FeS_cluster_insertion"/>
</dbReference>
<dbReference type="InterPro" id="IPR017870">
    <property type="entry name" value="FeS_cluster_insertion_CS"/>
</dbReference>
<dbReference type="InterPro" id="IPR035903">
    <property type="entry name" value="HesB-like_dom_sf"/>
</dbReference>
<dbReference type="InterPro" id="IPR011302">
    <property type="entry name" value="IscA_proteobacteria"/>
</dbReference>
<dbReference type="NCBIfam" id="TIGR00049">
    <property type="entry name" value="iron-sulfur cluster assembly accessory protein"/>
    <property type="match status" value="1"/>
</dbReference>
<dbReference type="NCBIfam" id="TIGR02011">
    <property type="entry name" value="IscA"/>
    <property type="match status" value="1"/>
</dbReference>
<dbReference type="NCBIfam" id="NF007049">
    <property type="entry name" value="PRK09502.1"/>
    <property type="match status" value="1"/>
</dbReference>
<dbReference type="PANTHER" id="PTHR10072:SF41">
    <property type="entry name" value="IRON-SULFUR CLUSTER ASSEMBLY 1 HOMOLOG, MITOCHONDRIAL"/>
    <property type="match status" value="1"/>
</dbReference>
<dbReference type="PANTHER" id="PTHR10072">
    <property type="entry name" value="IRON-SULFUR CLUSTER ASSEMBLY PROTEIN"/>
    <property type="match status" value="1"/>
</dbReference>
<dbReference type="Pfam" id="PF01521">
    <property type="entry name" value="Fe-S_biosyn"/>
    <property type="match status" value="1"/>
</dbReference>
<dbReference type="SUPFAM" id="SSF89360">
    <property type="entry name" value="HesB-like domain"/>
    <property type="match status" value="1"/>
</dbReference>
<dbReference type="PROSITE" id="PS01152">
    <property type="entry name" value="HESB"/>
    <property type="match status" value="1"/>
</dbReference>
<name>ISCA_ESCF3</name>
<proteinExistence type="inferred from homology"/>
<protein>
    <recommendedName>
        <fullName evidence="1">Iron-binding protein IscA</fullName>
    </recommendedName>
    <alternativeName>
        <fullName evidence="1">Iron-sulfur cluster assembly protein</fullName>
    </alternativeName>
</protein>
<accession>B7LKB1</accession>
<gene>
    <name evidence="1" type="primary">iscA</name>
    <name type="ordered locus">EFER_0644</name>
</gene>
<reference key="1">
    <citation type="journal article" date="2009" name="PLoS Genet.">
        <title>Organised genome dynamics in the Escherichia coli species results in highly diverse adaptive paths.</title>
        <authorList>
            <person name="Touchon M."/>
            <person name="Hoede C."/>
            <person name="Tenaillon O."/>
            <person name="Barbe V."/>
            <person name="Baeriswyl S."/>
            <person name="Bidet P."/>
            <person name="Bingen E."/>
            <person name="Bonacorsi S."/>
            <person name="Bouchier C."/>
            <person name="Bouvet O."/>
            <person name="Calteau A."/>
            <person name="Chiapello H."/>
            <person name="Clermont O."/>
            <person name="Cruveiller S."/>
            <person name="Danchin A."/>
            <person name="Diard M."/>
            <person name="Dossat C."/>
            <person name="Karoui M.E."/>
            <person name="Frapy E."/>
            <person name="Garry L."/>
            <person name="Ghigo J.M."/>
            <person name="Gilles A.M."/>
            <person name="Johnson J."/>
            <person name="Le Bouguenec C."/>
            <person name="Lescat M."/>
            <person name="Mangenot S."/>
            <person name="Martinez-Jehanne V."/>
            <person name="Matic I."/>
            <person name="Nassif X."/>
            <person name="Oztas S."/>
            <person name="Petit M.A."/>
            <person name="Pichon C."/>
            <person name="Rouy Z."/>
            <person name="Ruf C.S."/>
            <person name="Schneider D."/>
            <person name="Tourret J."/>
            <person name="Vacherie B."/>
            <person name="Vallenet D."/>
            <person name="Medigue C."/>
            <person name="Rocha E.P.C."/>
            <person name="Denamur E."/>
        </authorList>
    </citation>
    <scope>NUCLEOTIDE SEQUENCE [LARGE SCALE GENOMIC DNA]</scope>
    <source>
        <strain>ATCC 35469 / DSM 13698 / BCRC 15582 / CCUG 18766 / IAM 14443 / JCM 21226 / LMG 7866 / NBRC 102419 / NCTC 12128 / CDC 0568-73</strain>
    </source>
</reference>
<comment type="function">
    <text evidence="1">Is able to transfer iron-sulfur clusters to apo-ferredoxin. Multiple cycles of [2Fe2S] cluster formation and transfer are observed, suggesting that IscA acts catalytically. Recruits intracellular free iron so as to provide iron for the assembly of transient iron-sulfur cluster in IscU in the presence of IscS, L-cysteine and the thioredoxin reductase system TrxA/TrxB.</text>
</comment>
<comment type="cofactor">
    <cofactor evidence="1">
        <name>Fe cation</name>
        <dbReference type="ChEBI" id="CHEBI:24875"/>
    </cofactor>
    <text evidence="1">Binds 2 iron ions per dimer. The dimer may bind additional iron ions.</text>
</comment>
<comment type="subunit">
    <text evidence="1">Homodimer; may form tetramers and higher multimers.</text>
</comment>
<comment type="similarity">
    <text evidence="1">Belongs to the HesB/IscA family.</text>
</comment>
<evidence type="ECO:0000255" key="1">
    <source>
        <dbReference type="HAMAP-Rule" id="MF_01429"/>
    </source>
</evidence>
<sequence>MSITLSDSAAARVNTFLANRGKGFGLRLGVRTSGCSGMAYVLEFVDEPTPEDIVFEDKGVKVVVDGKSLQFLDGTQLDFVKEGLNEGFKFTNPNVKDECGCGESFHV</sequence>
<feature type="chain" id="PRO_1000145756" description="Iron-binding protein IscA">
    <location>
        <begin position="1"/>
        <end position="107"/>
    </location>
</feature>
<feature type="binding site" evidence="1">
    <location>
        <position position="35"/>
    </location>
    <ligand>
        <name>Fe cation</name>
        <dbReference type="ChEBI" id="CHEBI:24875"/>
    </ligand>
</feature>
<feature type="binding site" evidence="1">
    <location>
        <position position="99"/>
    </location>
    <ligand>
        <name>Fe cation</name>
        <dbReference type="ChEBI" id="CHEBI:24875"/>
    </ligand>
</feature>
<feature type="binding site" evidence="1">
    <location>
        <position position="101"/>
    </location>
    <ligand>
        <name>Fe cation</name>
        <dbReference type="ChEBI" id="CHEBI:24875"/>
    </ligand>
</feature>